<dbReference type="EC" id="6.1.1.14" evidence="1"/>
<dbReference type="EMBL" id="AM406671">
    <property type="protein sequence ID" value="CAL98055.1"/>
    <property type="molecule type" value="Genomic_DNA"/>
</dbReference>
<dbReference type="RefSeq" id="WP_011835326.1">
    <property type="nucleotide sequence ID" value="NC_009004.1"/>
</dbReference>
<dbReference type="SMR" id="A2RL88"/>
<dbReference type="STRING" id="416870.llmg_1477"/>
<dbReference type="KEGG" id="llm:llmg_1477"/>
<dbReference type="eggNOG" id="COG0751">
    <property type="taxonomic scope" value="Bacteria"/>
</dbReference>
<dbReference type="HOGENOM" id="CLU_007220_2_2_9"/>
<dbReference type="OrthoDB" id="9775440at2"/>
<dbReference type="PhylomeDB" id="A2RL88"/>
<dbReference type="Proteomes" id="UP000000364">
    <property type="component" value="Chromosome"/>
</dbReference>
<dbReference type="GO" id="GO:0005829">
    <property type="term" value="C:cytosol"/>
    <property type="evidence" value="ECO:0007669"/>
    <property type="project" value="TreeGrafter"/>
</dbReference>
<dbReference type="GO" id="GO:0005524">
    <property type="term" value="F:ATP binding"/>
    <property type="evidence" value="ECO:0007669"/>
    <property type="project" value="UniProtKB-UniRule"/>
</dbReference>
<dbReference type="GO" id="GO:0004820">
    <property type="term" value="F:glycine-tRNA ligase activity"/>
    <property type="evidence" value="ECO:0007669"/>
    <property type="project" value="UniProtKB-UniRule"/>
</dbReference>
<dbReference type="GO" id="GO:0006426">
    <property type="term" value="P:glycyl-tRNA aminoacylation"/>
    <property type="evidence" value="ECO:0007669"/>
    <property type="project" value="UniProtKB-UniRule"/>
</dbReference>
<dbReference type="HAMAP" id="MF_00255">
    <property type="entry name" value="Gly_tRNA_synth_beta"/>
    <property type="match status" value="1"/>
</dbReference>
<dbReference type="InterPro" id="IPR015944">
    <property type="entry name" value="Gly-tRNA-synth_bsu"/>
</dbReference>
<dbReference type="InterPro" id="IPR006194">
    <property type="entry name" value="Gly-tRNA-synth_heterodimer"/>
</dbReference>
<dbReference type="NCBIfam" id="TIGR00211">
    <property type="entry name" value="glyS"/>
    <property type="match status" value="1"/>
</dbReference>
<dbReference type="PANTHER" id="PTHR30075:SF2">
    <property type="entry name" value="GLYCINE--TRNA LIGASE, CHLOROPLASTIC_MITOCHONDRIAL 2"/>
    <property type="match status" value="1"/>
</dbReference>
<dbReference type="PANTHER" id="PTHR30075">
    <property type="entry name" value="GLYCYL-TRNA SYNTHETASE"/>
    <property type="match status" value="1"/>
</dbReference>
<dbReference type="Pfam" id="PF02092">
    <property type="entry name" value="tRNA_synt_2f"/>
    <property type="match status" value="1"/>
</dbReference>
<dbReference type="PRINTS" id="PR01045">
    <property type="entry name" value="TRNASYNTHGB"/>
</dbReference>
<dbReference type="SUPFAM" id="SSF109604">
    <property type="entry name" value="HD-domain/PDEase-like"/>
    <property type="match status" value="1"/>
</dbReference>
<dbReference type="PROSITE" id="PS50861">
    <property type="entry name" value="AA_TRNA_LIGASE_II_GLYAB"/>
    <property type="match status" value="1"/>
</dbReference>
<comment type="catalytic activity">
    <reaction evidence="1">
        <text>tRNA(Gly) + glycine + ATP = glycyl-tRNA(Gly) + AMP + diphosphate</text>
        <dbReference type="Rhea" id="RHEA:16013"/>
        <dbReference type="Rhea" id="RHEA-COMP:9664"/>
        <dbReference type="Rhea" id="RHEA-COMP:9683"/>
        <dbReference type="ChEBI" id="CHEBI:30616"/>
        <dbReference type="ChEBI" id="CHEBI:33019"/>
        <dbReference type="ChEBI" id="CHEBI:57305"/>
        <dbReference type="ChEBI" id="CHEBI:78442"/>
        <dbReference type="ChEBI" id="CHEBI:78522"/>
        <dbReference type="ChEBI" id="CHEBI:456215"/>
        <dbReference type="EC" id="6.1.1.14"/>
    </reaction>
</comment>
<comment type="subunit">
    <text evidence="1">Tetramer of two alpha and two beta subunits.</text>
</comment>
<comment type="subcellular location">
    <subcellularLocation>
        <location evidence="1">Cytoplasm</location>
    </subcellularLocation>
</comment>
<comment type="similarity">
    <text evidence="1">Belongs to the class-II aminoacyl-tRNA synthetase family.</text>
</comment>
<reference key="1">
    <citation type="journal article" date="2007" name="J. Bacteriol.">
        <title>The complete genome sequence of the lactic acid bacterial paradigm Lactococcus lactis subsp. cremoris MG1363.</title>
        <authorList>
            <person name="Wegmann U."/>
            <person name="O'Connell-Motherway M."/>
            <person name="Zomer A."/>
            <person name="Buist G."/>
            <person name="Shearman C."/>
            <person name="Canchaya C."/>
            <person name="Ventura M."/>
            <person name="Goesmann A."/>
            <person name="Gasson M.J."/>
            <person name="Kuipers O.P."/>
            <person name="van Sinderen D."/>
            <person name="Kok J."/>
        </authorList>
    </citation>
    <scope>NUCLEOTIDE SEQUENCE [LARGE SCALE GENOMIC DNA]</scope>
    <source>
        <strain>MG1363</strain>
    </source>
</reference>
<name>SYGB_LACLM</name>
<organism>
    <name type="scientific">Lactococcus lactis subsp. cremoris (strain MG1363)</name>
    <dbReference type="NCBI Taxonomy" id="416870"/>
    <lineage>
        <taxon>Bacteria</taxon>
        <taxon>Bacillati</taxon>
        <taxon>Bacillota</taxon>
        <taxon>Bacilli</taxon>
        <taxon>Lactobacillales</taxon>
        <taxon>Streptococcaceae</taxon>
        <taxon>Lactococcus</taxon>
        <taxon>Lactococcus cremoris subsp. cremoris</taxon>
    </lineage>
</organism>
<protein>
    <recommendedName>
        <fullName evidence="1">Glycine--tRNA ligase beta subunit</fullName>
        <ecNumber evidence="1">6.1.1.14</ecNumber>
    </recommendedName>
    <alternativeName>
        <fullName evidence="1">Glycyl-tRNA synthetase beta subunit</fullName>
        <shortName evidence="1">GlyRS</shortName>
    </alternativeName>
</protein>
<feature type="chain" id="PRO_1000101293" description="Glycine--tRNA ligase beta subunit">
    <location>
        <begin position="1"/>
        <end position="673"/>
    </location>
</feature>
<keyword id="KW-0030">Aminoacyl-tRNA synthetase</keyword>
<keyword id="KW-0067">ATP-binding</keyword>
<keyword id="KW-0963">Cytoplasm</keyword>
<keyword id="KW-0436">Ligase</keyword>
<keyword id="KW-0547">Nucleotide-binding</keyword>
<keyword id="KW-0648">Protein biosynthesis</keyword>
<proteinExistence type="inferred from homology"/>
<gene>
    <name evidence="1" type="primary">glyS</name>
    <name type="ordered locus">llmg_1477</name>
</gene>
<accession>A2RL88</accession>
<evidence type="ECO:0000255" key="1">
    <source>
        <dbReference type="HAMAP-Rule" id="MF_00255"/>
    </source>
</evidence>
<sequence length="673" mass="75642">MTNYLLEIGLEEIPAHLVTPSINQLAERMEAFLNENRLKFDKIIKFSTPRRLALIVEELSDSSEAIDEEVKGPSAKIAKDAEGNWSKAIQGFSRGQGATPDDLILKGDYYYAKKHVDGVKSEEILSKVGDEVIAKMTFSTYMKWGNNDFLFVRPIQWIVSLLEDEIVAFDLLDVTANRFSRGHRFLANVEIELKNANDYASKMPENFVLVDAEHRKAEISAQILALASENNWQVTLHKDLLEEVNNIVEYPTAFVGSFDPKYLSVPAEVLVTSMRDNQRYFEVYNQEGQLAPNFISVRNGNAEHIENVVLGNEKVLFARLEDAEFFWKEDQKLKIEDLVAKLAKVTFHAKIGSITEHMARTKLIAAKLADIAGLTDEEKVDVARSAEIYKFDLLTGMVGEFDELQGVMGEKYALLAGENANVAAAIREHYMPTSADGQLPETKVGSVLAAADKIDSVLSFFNVGLIPSGSNDPYALRRAVQGLIRIIEKMNWHFDLSLFIDQFEGQNHAEILEFVKARVQKLLLEKLDRYDIVEAAINSSNFDITNMMESAFVIDGHKLHEPFKPAIENVSRSINLVKKAADIAEINPALFEEDTEQALYDAVISLQNQWTYKPCEEKFRAIVHMLAPAIEAFFDNVMVMAEDLAVRDNRIALLSEVVALTSVMADFSLINTK</sequence>